<comment type="function">
    <text evidence="1 7 8 9">Mono-ADP-ribosyltransferase that mediates mono-ADP-ribosylation of target proteins and plays a key role in the response to DNA damage (PubMed:21270334, PubMed:24598253). Mediates mono-ADP-ribosylation of glutamate, aspartate or lysine residues on target proteins (By similarity). In contrast to PARP1 and PARP2, it is not able to mediate poly-ADP-ribosylation (By similarity). Involved in DNA repair by mediating mono-ADP-ribosylation of a limited number of acceptor proteins involved in chromatin architecture and in DNA metabolism, such as histone H2B, XRCC5 and XRCC6 (By similarity). ADP-ribosylation follows DNA damage and appears as an obligatory step in a detection/signaling pathway leading to the reparation of DNA strand breaks (By similarity). Involved in single-strand break repair by catalyzing mono-ADP-ribosylation of histone H2B on 'Glu-2' (H2BE2ADPr) of nucleosomes containing nicked DNA (By similarity). Cooperates with the XRCC5-XRCC6 (Ku80-Ku70) heterodimer to limit end-resection thereby promoting accurate NHEJ (By similarity). Suppresses G-quadruplex (G4) structures in response to DNA damage (By similarity). Associates with a number of DNA repair factors and is involved in the response to exogenous and endogenous DNA strand breaks (PubMed:21270334). Together with APLF, promotes the retention of the LIG4-XRCC4 complex on chromatin and accelerate DNA ligation during non-homologous end-joining (NHEJ) (By similarity). May link the DNA damage surveillance network to the mitotic fidelity checkpoint (By similarity). Acts as a negative regulator of immunoglobulin class switch recombination, probably by controlling the level of AICDA /AID on the chromatin (PubMed:26000965). In addition to proteins, also able to ADP-ribosylate DNA: mediates DNA mono-ADP-ribosylation of DNA strand break termini via covalent addition of a single ADP-ribose moiety to a 5'- or 3'-terminal phosphate residues in DNA containing multiple strand breaks (By similarity).</text>
</comment>
<comment type="catalytic activity">
    <reaction evidence="1">
        <text>L-aspartyl-[protein] + NAD(+) = 4-O-(ADP-D-ribosyl)-L-aspartyl-[protein] + nicotinamide</text>
        <dbReference type="Rhea" id="RHEA:54424"/>
        <dbReference type="Rhea" id="RHEA-COMP:9867"/>
        <dbReference type="Rhea" id="RHEA-COMP:13832"/>
        <dbReference type="ChEBI" id="CHEBI:17154"/>
        <dbReference type="ChEBI" id="CHEBI:29961"/>
        <dbReference type="ChEBI" id="CHEBI:57540"/>
        <dbReference type="ChEBI" id="CHEBI:138102"/>
    </reaction>
</comment>
<comment type="catalytic activity">
    <reaction evidence="1">
        <text>L-glutamyl-[protein] + NAD(+) = 5-O-(ADP-D-ribosyl)-L-glutamyl-[protein] + nicotinamide</text>
        <dbReference type="Rhea" id="RHEA:58224"/>
        <dbReference type="Rhea" id="RHEA-COMP:10208"/>
        <dbReference type="Rhea" id="RHEA-COMP:15089"/>
        <dbReference type="ChEBI" id="CHEBI:17154"/>
        <dbReference type="ChEBI" id="CHEBI:29973"/>
        <dbReference type="ChEBI" id="CHEBI:57540"/>
        <dbReference type="ChEBI" id="CHEBI:142540"/>
    </reaction>
</comment>
<comment type="catalytic activity">
    <reaction evidence="1">
        <text>L-lysyl-[protein] + NAD(+) = N(6)-(ADP-D-ribosyl)-L-lysyl-[protein] + nicotinamide + H(+)</text>
        <dbReference type="Rhea" id="RHEA:58220"/>
        <dbReference type="Rhea" id="RHEA-COMP:9752"/>
        <dbReference type="Rhea" id="RHEA-COMP:15088"/>
        <dbReference type="ChEBI" id="CHEBI:15378"/>
        <dbReference type="ChEBI" id="CHEBI:17154"/>
        <dbReference type="ChEBI" id="CHEBI:29969"/>
        <dbReference type="ChEBI" id="CHEBI:57540"/>
        <dbReference type="ChEBI" id="CHEBI:142515"/>
    </reaction>
</comment>
<comment type="subunit">
    <text evidence="1">Interacts with PARP1; leading to activate PARP1 in absence of DNA. Interacts with PRKDC. Interacts with XRCC5/Ku80; the interaction is dependent on nucleic acids. Interacts with XRCC6/Ku70; the interaction is dependent on nucleic acids. Interacts with EZH2, HDAC1, HDAC2, SUZ12, YY1, LRIG3 and LIG4.</text>
</comment>
<comment type="subcellular location">
    <subcellularLocation>
        <location evidence="1">Nucleus</location>
    </subcellularLocation>
    <subcellularLocation>
        <location evidence="1">Chromosome</location>
    </subcellularLocation>
    <subcellularLocation>
        <location evidence="1">Cytoplasm</location>
        <location evidence="1">Cytoskeleton</location>
        <location evidence="1">Microtubule organizing center</location>
        <location evidence="1">Centrosome</location>
    </subcellularLocation>
    <subcellularLocation>
        <location evidence="1">Cytoplasm</location>
        <location evidence="1">Cytoskeleton</location>
        <location evidence="1">Microtubule organizing center</location>
        <location evidence="1">Centrosome</location>
        <location evidence="1">Centriole</location>
    </subcellularLocation>
    <text evidence="1">Almost exclusively localized in the nucleus and appears in numerous small foci and a small number of larger foci whereas a centrosomal location has not been detected. In response to DNA damage, localizes to sites of double-strand break. Also localizes to single-strand breaks. Preferentially localized to the daughter centriole.</text>
</comment>
<comment type="alternative products">
    <event type="alternative splicing"/>
    <isoform>
        <id>Q3ULW8-1</id>
        <name>1</name>
        <sequence type="displayed"/>
    </isoform>
    <isoform>
        <id>Q3ULW8-2</id>
        <name>2</name>
        <sequence type="described" ref="VSP_060032"/>
    </isoform>
</comment>
<comment type="PTM">
    <text evidence="1">Auto-ADP-ribosylated.</text>
</comment>
<comment type="disruption phenotype">
    <text evidence="7 9">No visible phenotype in normal conditions, but mutant mice are sensitive to ionizing radiation (PubMed:21270334). In B-cells, class switch recombination is increased, while somatic hypermutation is unaffected, due to increased occupancy of Aicda/Aid at the donor switch region (PubMed:26000965).</text>
</comment>
<comment type="similarity">
    <text evidence="12">Belongs to the ARTD/PARP family.</text>
</comment>
<keyword id="KW-0013">ADP-ribosylation</keyword>
<keyword id="KW-0025">Alternative splicing</keyword>
<keyword id="KW-0158">Chromosome</keyword>
<keyword id="KW-0963">Cytoplasm</keyword>
<keyword id="KW-0206">Cytoskeleton</keyword>
<keyword id="KW-0227">DNA damage</keyword>
<keyword id="KW-0234">DNA repair</keyword>
<keyword id="KW-0328">Glycosyltransferase</keyword>
<keyword id="KW-0520">NAD</keyword>
<keyword id="KW-0548">Nucleotidyltransferase</keyword>
<keyword id="KW-0539">Nucleus</keyword>
<keyword id="KW-1185">Reference proteome</keyword>
<keyword id="KW-0808">Transferase</keyword>
<proteinExistence type="evidence at transcript level"/>
<reference key="1">
    <citation type="journal article" date="2002" name="Folia Biol. (Praha)">
        <title>Cloning and expression of PARP-3 (Adprt3) and U3-55k, two genes closely linked on mouse chromosome 9.</title>
        <authorList>
            <person name="Urbanek P."/>
            <person name="Paces J."/>
            <person name="Kralova J."/>
            <person name="Dvorak M."/>
            <person name="Paces V."/>
        </authorList>
    </citation>
    <scope>NUCLEOTIDE SEQUENCE [MRNA] (ISOFORM 2)</scope>
    <source>
        <strain>C57BL/6J</strain>
    </source>
</reference>
<reference key="2">
    <citation type="journal article" date="2005" name="Science">
        <title>The transcriptional landscape of the mammalian genome.</title>
        <authorList>
            <person name="Carninci P."/>
            <person name="Kasukawa T."/>
            <person name="Katayama S."/>
            <person name="Gough J."/>
            <person name="Frith M.C."/>
            <person name="Maeda N."/>
            <person name="Oyama R."/>
            <person name="Ravasi T."/>
            <person name="Lenhard B."/>
            <person name="Wells C."/>
            <person name="Kodzius R."/>
            <person name="Shimokawa K."/>
            <person name="Bajic V.B."/>
            <person name="Brenner S.E."/>
            <person name="Batalov S."/>
            <person name="Forrest A.R."/>
            <person name="Zavolan M."/>
            <person name="Davis M.J."/>
            <person name="Wilming L.G."/>
            <person name="Aidinis V."/>
            <person name="Allen J.E."/>
            <person name="Ambesi-Impiombato A."/>
            <person name="Apweiler R."/>
            <person name="Aturaliya R.N."/>
            <person name="Bailey T.L."/>
            <person name="Bansal M."/>
            <person name="Baxter L."/>
            <person name="Beisel K.W."/>
            <person name="Bersano T."/>
            <person name="Bono H."/>
            <person name="Chalk A.M."/>
            <person name="Chiu K.P."/>
            <person name="Choudhary V."/>
            <person name="Christoffels A."/>
            <person name="Clutterbuck D.R."/>
            <person name="Crowe M.L."/>
            <person name="Dalla E."/>
            <person name="Dalrymple B.P."/>
            <person name="de Bono B."/>
            <person name="Della Gatta G."/>
            <person name="di Bernardo D."/>
            <person name="Down T."/>
            <person name="Engstrom P."/>
            <person name="Fagiolini M."/>
            <person name="Faulkner G."/>
            <person name="Fletcher C.F."/>
            <person name="Fukushima T."/>
            <person name="Furuno M."/>
            <person name="Futaki S."/>
            <person name="Gariboldi M."/>
            <person name="Georgii-Hemming P."/>
            <person name="Gingeras T.R."/>
            <person name="Gojobori T."/>
            <person name="Green R.E."/>
            <person name="Gustincich S."/>
            <person name="Harbers M."/>
            <person name="Hayashi Y."/>
            <person name="Hensch T.K."/>
            <person name="Hirokawa N."/>
            <person name="Hill D."/>
            <person name="Huminiecki L."/>
            <person name="Iacono M."/>
            <person name="Ikeo K."/>
            <person name="Iwama A."/>
            <person name="Ishikawa T."/>
            <person name="Jakt M."/>
            <person name="Kanapin A."/>
            <person name="Katoh M."/>
            <person name="Kawasawa Y."/>
            <person name="Kelso J."/>
            <person name="Kitamura H."/>
            <person name="Kitano H."/>
            <person name="Kollias G."/>
            <person name="Krishnan S.P."/>
            <person name="Kruger A."/>
            <person name="Kummerfeld S.K."/>
            <person name="Kurochkin I.V."/>
            <person name="Lareau L.F."/>
            <person name="Lazarevic D."/>
            <person name="Lipovich L."/>
            <person name="Liu J."/>
            <person name="Liuni S."/>
            <person name="McWilliam S."/>
            <person name="Madan Babu M."/>
            <person name="Madera M."/>
            <person name="Marchionni L."/>
            <person name="Matsuda H."/>
            <person name="Matsuzawa S."/>
            <person name="Miki H."/>
            <person name="Mignone F."/>
            <person name="Miyake S."/>
            <person name="Morris K."/>
            <person name="Mottagui-Tabar S."/>
            <person name="Mulder N."/>
            <person name="Nakano N."/>
            <person name="Nakauchi H."/>
            <person name="Ng P."/>
            <person name="Nilsson R."/>
            <person name="Nishiguchi S."/>
            <person name="Nishikawa S."/>
            <person name="Nori F."/>
            <person name="Ohara O."/>
            <person name="Okazaki Y."/>
            <person name="Orlando V."/>
            <person name="Pang K.C."/>
            <person name="Pavan W.J."/>
            <person name="Pavesi G."/>
            <person name="Pesole G."/>
            <person name="Petrovsky N."/>
            <person name="Piazza S."/>
            <person name="Reed J."/>
            <person name="Reid J.F."/>
            <person name="Ring B.Z."/>
            <person name="Ringwald M."/>
            <person name="Rost B."/>
            <person name="Ruan Y."/>
            <person name="Salzberg S.L."/>
            <person name="Sandelin A."/>
            <person name="Schneider C."/>
            <person name="Schoenbach C."/>
            <person name="Sekiguchi K."/>
            <person name="Semple C.A."/>
            <person name="Seno S."/>
            <person name="Sessa L."/>
            <person name="Sheng Y."/>
            <person name="Shibata Y."/>
            <person name="Shimada H."/>
            <person name="Shimada K."/>
            <person name="Silva D."/>
            <person name="Sinclair B."/>
            <person name="Sperling S."/>
            <person name="Stupka E."/>
            <person name="Sugiura K."/>
            <person name="Sultana R."/>
            <person name="Takenaka Y."/>
            <person name="Taki K."/>
            <person name="Tammoja K."/>
            <person name="Tan S.L."/>
            <person name="Tang S."/>
            <person name="Taylor M.S."/>
            <person name="Tegner J."/>
            <person name="Teichmann S.A."/>
            <person name="Ueda H.R."/>
            <person name="van Nimwegen E."/>
            <person name="Verardo R."/>
            <person name="Wei C.L."/>
            <person name="Yagi K."/>
            <person name="Yamanishi H."/>
            <person name="Zabarovsky E."/>
            <person name="Zhu S."/>
            <person name="Zimmer A."/>
            <person name="Hide W."/>
            <person name="Bult C."/>
            <person name="Grimmond S.M."/>
            <person name="Teasdale R.D."/>
            <person name="Liu E.T."/>
            <person name="Brusic V."/>
            <person name="Quackenbush J."/>
            <person name="Wahlestedt C."/>
            <person name="Mattick J.S."/>
            <person name="Hume D.A."/>
            <person name="Kai C."/>
            <person name="Sasaki D."/>
            <person name="Tomaru Y."/>
            <person name="Fukuda S."/>
            <person name="Kanamori-Katayama M."/>
            <person name="Suzuki M."/>
            <person name="Aoki J."/>
            <person name="Arakawa T."/>
            <person name="Iida J."/>
            <person name="Imamura K."/>
            <person name="Itoh M."/>
            <person name="Kato T."/>
            <person name="Kawaji H."/>
            <person name="Kawagashira N."/>
            <person name="Kawashima T."/>
            <person name="Kojima M."/>
            <person name="Kondo S."/>
            <person name="Konno H."/>
            <person name="Nakano K."/>
            <person name="Ninomiya N."/>
            <person name="Nishio T."/>
            <person name="Okada M."/>
            <person name="Plessy C."/>
            <person name="Shibata K."/>
            <person name="Shiraki T."/>
            <person name="Suzuki S."/>
            <person name="Tagami M."/>
            <person name="Waki K."/>
            <person name="Watahiki A."/>
            <person name="Okamura-Oho Y."/>
            <person name="Suzuki H."/>
            <person name="Kawai J."/>
            <person name="Hayashizaki Y."/>
        </authorList>
    </citation>
    <scope>NUCLEOTIDE SEQUENCE [LARGE SCALE MRNA] (ISOFORMS 1 AND 2)</scope>
    <source>
        <strain>C57BL/6J</strain>
        <strain>NOD</strain>
        <tissue>Mammary gland</tissue>
        <tissue>Retina</tissue>
    </source>
</reference>
<reference key="3">
    <citation type="journal article" date="2009" name="PLoS Biol.">
        <title>Lineage-specific biology revealed by a finished genome assembly of the mouse.</title>
        <authorList>
            <person name="Church D.M."/>
            <person name="Goodstadt L."/>
            <person name="Hillier L.W."/>
            <person name="Zody M.C."/>
            <person name="Goldstein S."/>
            <person name="She X."/>
            <person name="Bult C.J."/>
            <person name="Agarwala R."/>
            <person name="Cherry J.L."/>
            <person name="DiCuccio M."/>
            <person name="Hlavina W."/>
            <person name="Kapustin Y."/>
            <person name="Meric P."/>
            <person name="Maglott D."/>
            <person name="Birtle Z."/>
            <person name="Marques A.C."/>
            <person name="Graves T."/>
            <person name="Zhou S."/>
            <person name="Teague B."/>
            <person name="Potamousis K."/>
            <person name="Churas C."/>
            <person name="Place M."/>
            <person name="Herschleb J."/>
            <person name="Runnheim R."/>
            <person name="Forrest D."/>
            <person name="Amos-Landgraf J."/>
            <person name="Schwartz D.C."/>
            <person name="Cheng Z."/>
            <person name="Lindblad-Toh K."/>
            <person name="Eichler E.E."/>
            <person name="Ponting C.P."/>
        </authorList>
    </citation>
    <scope>NUCLEOTIDE SEQUENCE [LARGE SCALE GENOMIC DNA]</scope>
    <source>
        <strain>C57BL/6J</strain>
    </source>
</reference>
<reference key="4">
    <citation type="journal article" date="2004" name="Genome Res.">
        <title>The status, quality, and expansion of the NIH full-length cDNA project: the Mammalian Gene Collection (MGC).</title>
        <authorList>
            <consortium name="The MGC Project Team"/>
        </authorList>
    </citation>
    <scope>NUCLEOTIDE SEQUENCE [LARGE SCALE MRNA] (ISOFORM 2)</scope>
    <source>
        <strain>FVB/N</strain>
        <tissue>Colon</tissue>
    </source>
</reference>
<reference key="5">
    <citation type="journal article" date="2011" name="Proc. Natl. Acad. Sci. U.S.A.">
        <title>Poly(ADP-ribose) polymerase 3 (PARP3), a newcomer in cellular response to DNA damage and mitotic progression.</title>
        <authorList>
            <person name="Boehler C."/>
            <person name="Gauthier L.R."/>
            <person name="Mortusewicz O."/>
            <person name="Biard D.S."/>
            <person name="Saliou J.M."/>
            <person name="Bresson A."/>
            <person name="Sanglier-Cianferani S."/>
            <person name="Smith S."/>
            <person name="Schreiber V."/>
            <person name="Boussin F."/>
            <person name="Dantzer F."/>
        </authorList>
    </citation>
    <scope>FUNCTION</scope>
    <scope>SUBCELLULAR LOCATION</scope>
    <scope>DISRUPTION PHENOTYPE</scope>
</reference>
<reference key="6">
    <citation type="journal article" date="2014" name="Nucleic Acids Res.">
        <title>PARP3 affects the relative contribution of homologous recombination and nonhomologous end-joining pathways.</title>
        <authorList>
            <person name="Beck C."/>
            <person name="Boehler C."/>
            <person name="Guirouilh Barbat J."/>
            <person name="Bonnet M.E."/>
            <person name="Illuzzi G."/>
            <person name="Ronde P."/>
            <person name="Gauthier L.R."/>
            <person name="Magroun N."/>
            <person name="Rajendran A."/>
            <person name="Lopez B.S."/>
            <person name="Scully R."/>
            <person name="Boussin F.D."/>
            <person name="Schreiber V."/>
            <person name="Dantzer F."/>
        </authorList>
    </citation>
    <scope>FUNCTION</scope>
</reference>
<reference key="7">
    <citation type="journal article" date="2015" name="PLoS Genet.">
        <title>Parp3 negatively regulates immunoglobulin class switch recombination.</title>
        <authorList>
            <person name="Robert I."/>
            <person name="Gaudot L."/>
            <person name="Rogier M."/>
            <person name="Heyer V."/>
            <person name="Noll A."/>
            <person name="Dantzer F."/>
            <person name="Reina-San-Martin B."/>
        </authorList>
    </citation>
    <scope>FUNCTION</scope>
    <scope>DISRUPTION PHENOTYPE</scope>
</reference>
<reference key="8">
    <citation type="journal article" date="2018" name="Proc. Natl. Acad. Sci. U.S.A.">
        <title>Parp3 promotes long-range end joining in murine cells.</title>
        <authorList>
            <person name="Layer J.V."/>
            <person name="Cleary J.P."/>
            <person name="Brown A.J."/>
            <person name="Stevenson K.E."/>
            <person name="Morrow S.N."/>
            <person name="Van Scoyk A."/>
            <person name="Blasco R.B."/>
            <person name="Karaca E."/>
            <person name="Meng F.L."/>
            <person name="Frock R.L."/>
            <person name="Tivey T."/>
            <person name="Kim S."/>
            <person name="Fuchs H."/>
            <person name="Chiarle R."/>
            <person name="Alt F.W."/>
            <person name="Roberts S.A."/>
            <person name="Weinstock D.M."/>
            <person name="Day T.A."/>
        </authorList>
    </citation>
    <scope>FUNCTION</scope>
</reference>
<sequence>MAPKRKASVQTEGSKKRRQGTEEEDSFRSTAEALRAAPADNRVIRVDPSCPFSRNPGIQVHEDYDCTLNQTNIGNNNNKFYIIQLLEEGSRFFCWNRWGRVGEVGQSKMNHFTCLEDAKKDFKKKFWEKTKNKWEERDRFVAQPNKYTLIEVQGEAESQEAVVKALSPQVYSGPVRTVVKPCSLDPATQNLITNIFSKEMFKNAMTLMNLDVKKMPLGKLTKQQIARGFEALEALEEAMKNPTGDGQSLEELSSCFYTVIPHNFGRSRPPPINSPDVLQAKKDMLLVLADIELAQTLQAAPGEEEEKVEEVPHPLDRDYQLLRCQLQLLDSGESEYKAIQTYLKQTGNSYRCPDLRHVWKVNREGEGDRFQAHSKLGNRRLLWHGTNVAVVAAILTSGLRIMPHSGGRVGKGIYFASENSKSAGYVTTMHCGGHQVGYMFLGEVALGKEHHITIDDPSLKSPPSGFDSVIARGQTEPDPAQDIELELDGQPVVVPQGPPVQCPSFKSSSFSQSEYLIYKESQCRLRYLLEIHL</sequence>
<gene>
    <name evidence="11 13" type="primary">Parp3</name>
    <name evidence="10" type="synonym">Adprt3</name>
</gene>
<evidence type="ECO:0000250" key="1">
    <source>
        <dbReference type="UniProtKB" id="Q9Y6F1"/>
    </source>
</evidence>
<evidence type="ECO:0000255" key="2"/>
<evidence type="ECO:0000255" key="3">
    <source>
        <dbReference type="PROSITE-ProRule" id="PRU00397"/>
    </source>
</evidence>
<evidence type="ECO:0000255" key="4">
    <source>
        <dbReference type="PROSITE-ProRule" id="PRU00398"/>
    </source>
</evidence>
<evidence type="ECO:0000255" key="5">
    <source>
        <dbReference type="PROSITE-ProRule" id="PRU01321"/>
    </source>
</evidence>
<evidence type="ECO:0000256" key="6">
    <source>
        <dbReference type="SAM" id="MobiDB-lite"/>
    </source>
</evidence>
<evidence type="ECO:0000269" key="7">
    <source>
    </source>
</evidence>
<evidence type="ECO:0000269" key="8">
    <source>
    </source>
</evidence>
<evidence type="ECO:0000269" key="9">
    <source>
    </source>
</evidence>
<evidence type="ECO:0000303" key="10">
    <source>
    </source>
</evidence>
<evidence type="ECO:0000303" key="11">
    <source>
    </source>
</evidence>
<evidence type="ECO:0000305" key="12"/>
<evidence type="ECO:0000312" key="13">
    <source>
        <dbReference type="MGI" id="MGI:1891258"/>
    </source>
</evidence>
<feature type="chain" id="PRO_0000446170" description="Protein mono-ADP-ribosyltransferase PARP3">
    <location>
        <begin position="1"/>
        <end position="533"/>
    </location>
</feature>
<feature type="domain" description="WGR" evidence="5">
    <location>
        <begin position="57"/>
        <end position="147"/>
    </location>
</feature>
<feature type="domain" description="PARP alpha-helical" evidence="4">
    <location>
        <begin position="181"/>
        <end position="299"/>
    </location>
</feature>
<feature type="domain" description="PARP catalytic" evidence="3">
    <location>
        <begin position="313"/>
        <end position="533"/>
    </location>
</feature>
<feature type="region of interest" description="Disordered" evidence="6">
    <location>
        <begin position="1"/>
        <end position="30"/>
    </location>
</feature>
<feature type="short sequence motif" description="Nuclear localization signal" evidence="2">
    <location>
        <begin position="14"/>
        <end position="18"/>
    </location>
</feature>
<feature type="modified residue" description="N6-(ADP-ribosyl)lysine" evidence="1">
    <location>
        <position position="6"/>
    </location>
</feature>
<feature type="modified residue" description="ADP-ribosyl glutamic acid" evidence="1">
    <location>
        <position position="12"/>
    </location>
</feature>
<feature type="modified residue" description="ADP-ribosyl glutamic acid" evidence="1">
    <location>
        <position position="24"/>
    </location>
</feature>
<feature type="modified residue" description="ADP-ribosyl glutamic acid" evidence="1">
    <location>
        <position position="32"/>
    </location>
</feature>
<feature type="modified residue" description="ADP-ribosyl aspartic acid" evidence="1">
    <location>
        <position position="138"/>
    </location>
</feature>
<feature type="modified residue" description="ADP-ribosyl glutamic acid" evidence="1">
    <location>
        <position position="160"/>
    </location>
</feature>
<feature type="modified residue" description="ADP-ribosyl glutamic acid" evidence="1">
    <location>
        <position position="230"/>
    </location>
</feature>
<feature type="modified residue" description="ADP-ribosyl glutamic acid" evidence="1">
    <location>
        <position position="309"/>
    </location>
</feature>
<feature type="modified residue" description="ADP-ribosyl glutamic acid" evidence="1">
    <location>
        <position position="310"/>
    </location>
</feature>
<feature type="splice variant" id="VSP_060032" description="In isoform 2.">
    <location>
        <begin position="165"/>
        <end position="169"/>
    </location>
</feature>
<feature type="sequence conflict" description="In Ref. 2; BAC31826 and 4; AAH14870/AAH58754." evidence="12" ref="2 4">
    <original>R</original>
    <variation>Q</variation>
    <location>
        <position position="17"/>
    </location>
</feature>
<feature type="sequence conflict" description="In Ref. 2; BAC31826 and 4; AAH14870/AAH58754." evidence="12" ref="2 4">
    <original>Y</original>
    <variation>D</variation>
    <location>
        <position position="171"/>
    </location>
</feature>
<feature type="sequence conflict" description="In Ref. 4; AAH14870/AAH58754." evidence="12" ref="4">
    <original>A</original>
    <variation>V</variation>
    <location>
        <position position="294"/>
    </location>
</feature>
<feature type="sequence conflict" description="In Ref. 2; BAC31826 and 4; AAH14870/AAH58754." evidence="12" ref="2 4">
    <original>D</original>
    <variation>N</variation>
    <location>
        <position position="354"/>
    </location>
</feature>
<feature type="sequence conflict" description="In Ref. 2; BAE28191." evidence="12" ref="2">
    <original>L</original>
    <variation>I</variation>
    <location>
        <position position="446"/>
    </location>
</feature>
<feature type="sequence conflict" description="In Ref. 2; BAC31826 and 4; AAH14870/AAH58754." evidence="12" ref="2 4">
    <original>S</original>
    <variation>P</variation>
    <location>
        <position position="464"/>
    </location>
</feature>
<name>PARP3_MOUSE</name>
<accession>Q3ULW8</accession>
<accession>A0A1L1SRP6</accession>
<accession>E9PX17</accession>
<accession>E9Q992</accession>
<accession>Q3UGL7</accession>
<accession>Q8BHN6</accession>
<accession>Q8BXU2</accession>
<accession>Q8CFB8</accession>
<accession>Q91YR6</accession>
<organism>
    <name type="scientific">Mus musculus</name>
    <name type="common">Mouse</name>
    <dbReference type="NCBI Taxonomy" id="10090"/>
    <lineage>
        <taxon>Eukaryota</taxon>
        <taxon>Metazoa</taxon>
        <taxon>Chordata</taxon>
        <taxon>Craniata</taxon>
        <taxon>Vertebrata</taxon>
        <taxon>Euteleostomi</taxon>
        <taxon>Mammalia</taxon>
        <taxon>Eutheria</taxon>
        <taxon>Euarchontoglires</taxon>
        <taxon>Glires</taxon>
        <taxon>Rodentia</taxon>
        <taxon>Myomorpha</taxon>
        <taxon>Muroidea</taxon>
        <taxon>Muridae</taxon>
        <taxon>Murinae</taxon>
        <taxon>Mus</taxon>
        <taxon>Mus</taxon>
    </lineage>
</organism>
<dbReference type="EC" id="2.4.2.-" evidence="1"/>
<dbReference type="EMBL" id="AF368233">
    <property type="protein sequence ID" value="AAN62793.1"/>
    <property type="molecule type" value="mRNA"/>
</dbReference>
<dbReference type="EMBL" id="AY046316">
    <property type="protein sequence ID" value="AAL08055.1"/>
    <property type="molecule type" value="mRNA"/>
</dbReference>
<dbReference type="EMBL" id="AY046317">
    <property type="protein sequence ID" value="AAL08056.1"/>
    <property type="molecule type" value="mRNA"/>
</dbReference>
<dbReference type="EMBL" id="AK044223">
    <property type="protein sequence ID" value="BAC31826.1"/>
    <property type="molecule type" value="mRNA"/>
</dbReference>
<dbReference type="EMBL" id="AK147868">
    <property type="protein sequence ID" value="BAE28191.1"/>
    <property type="molecule type" value="mRNA"/>
</dbReference>
<dbReference type="EMBL" id="AK170541">
    <property type="protein sequence ID" value="BAE41867.1"/>
    <property type="molecule type" value="mRNA"/>
</dbReference>
<dbReference type="EMBL" id="AK145259">
    <property type="protein sequence ID" value="BAE26330.1"/>
    <property type="molecule type" value="mRNA"/>
</dbReference>
<dbReference type="EMBL" id="AC151729">
    <property type="status" value="NOT_ANNOTATED_CDS"/>
    <property type="molecule type" value="Genomic_DNA"/>
</dbReference>
<dbReference type="EMBL" id="BC014870">
    <property type="protein sequence ID" value="AAH14870.1"/>
    <property type="molecule type" value="mRNA"/>
</dbReference>
<dbReference type="EMBL" id="BC058754">
    <property type="protein sequence ID" value="AAH58754.1"/>
    <property type="molecule type" value="mRNA"/>
</dbReference>
<dbReference type="CCDS" id="CCDS23480.1">
    <molecule id="Q3ULW8-2"/>
</dbReference>
<dbReference type="CCDS" id="CCDS81066.1">
    <molecule id="Q3ULW8-1"/>
</dbReference>
<dbReference type="RefSeq" id="NP_001298079.1">
    <molecule id="Q3ULW8-1"/>
    <property type="nucleotide sequence ID" value="NM_001311150.1"/>
</dbReference>
<dbReference type="RefSeq" id="NP_663594.2">
    <molecule id="Q3ULW8-2"/>
    <property type="nucleotide sequence ID" value="NM_145619.3"/>
</dbReference>
<dbReference type="RefSeq" id="XP_006511781.1">
    <molecule id="Q3ULW8-1"/>
    <property type="nucleotide sequence ID" value="XM_006511718.1"/>
</dbReference>
<dbReference type="RefSeq" id="XP_006511782.1">
    <molecule id="Q3ULW8-1"/>
    <property type="nucleotide sequence ID" value="XM_006511719.4"/>
</dbReference>
<dbReference type="RefSeq" id="XP_006511783.1">
    <molecule id="Q3ULW8-2"/>
    <property type="nucleotide sequence ID" value="XM_006511720.2"/>
</dbReference>
<dbReference type="SMR" id="Q3ULW8"/>
<dbReference type="FunCoup" id="Q3ULW8">
    <property type="interactions" value="259"/>
</dbReference>
<dbReference type="STRING" id="10090.ENSMUSP00000108098"/>
<dbReference type="BindingDB" id="Q3ULW8"/>
<dbReference type="ChEMBL" id="CHEMBL3292"/>
<dbReference type="GlyGen" id="Q3ULW8">
    <property type="glycosylation" value="1 site, 1 O-linked glycan (1 site)"/>
</dbReference>
<dbReference type="iPTMnet" id="Q3ULW8"/>
<dbReference type="PhosphoSitePlus" id="Q3ULW8"/>
<dbReference type="jPOST" id="Q3ULW8"/>
<dbReference type="PaxDb" id="10090-ENSMUSP00000064513"/>
<dbReference type="ProteomicsDB" id="309835"/>
<dbReference type="ProteomicsDB" id="336548">
    <molecule id="Q3ULW8-1"/>
</dbReference>
<dbReference type="ProteomicsDB" id="342746"/>
<dbReference type="ProteomicsDB" id="363513"/>
<dbReference type="ProteomicsDB" id="365744"/>
<dbReference type="Pumba" id="Q3ULW8"/>
<dbReference type="Antibodypedia" id="7395">
    <property type="antibodies" value="300 antibodies from 37 providers"/>
</dbReference>
<dbReference type="DNASU" id="235587"/>
<dbReference type="Ensembl" id="ENSMUST00000067218.14">
    <molecule id="Q3ULW8-2"/>
    <property type="protein sequence ID" value="ENSMUSP00000064513.8"/>
    <property type="gene ID" value="ENSMUSG00000023249.16"/>
</dbReference>
<dbReference type="Ensembl" id="ENSMUST00000112479.9">
    <molecule id="Q3ULW8-1"/>
    <property type="protein sequence ID" value="ENSMUSP00000108098.3"/>
    <property type="gene ID" value="ENSMUSG00000023249.16"/>
</dbReference>
<dbReference type="Ensembl" id="ENSMUST00000123555.8">
    <molecule id="Q3ULW8-2"/>
    <property type="protein sequence ID" value="ENSMUSP00000123054.2"/>
    <property type="gene ID" value="ENSMUSG00000023249.16"/>
</dbReference>
<dbReference type="GeneID" id="235587"/>
<dbReference type="KEGG" id="mmu:235587"/>
<dbReference type="UCSC" id="uc009rjw.1">
    <property type="organism name" value="mouse"/>
</dbReference>
<dbReference type="UCSC" id="uc009rjz.1">
    <molecule id="Q3ULW8-1"/>
    <property type="organism name" value="mouse"/>
</dbReference>
<dbReference type="AGR" id="MGI:1891258"/>
<dbReference type="CTD" id="10039"/>
<dbReference type="MGI" id="MGI:1891258">
    <property type="gene designation" value="Parp3"/>
</dbReference>
<dbReference type="VEuPathDB" id="HostDB:ENSMUSG00000023249"/>
<dbReference type="eggNOG" id="KOG1037">
    <property type="taxonomic scope" value="Eukaryota"/>
</dbReference>
<dbReference type="GeneTree" id="ENSGT00940000158855"/>
<dbReference type="HOGENOM" id="CLU_1566515_0_0_1"/>
<dbReference type="InParanoid" id="Q3ULW8"/>
<dbReference type="OMA" id="HHITTDN"/>
<dbReference type="OrthoDB" id="2017365at2759"/>
<dbReference type="PhylomeDB" id="Q3ULW8"/>
<dbReference type="TreeFam" id="TF315407"/>
<dbReference type="BioGRID-ORCS" id="235587">
    <property type="hits" value="3 hits in 113 CRISPR screens"/>
</dbReference>
<dbReference type="ChiTaRS" id="Parp3">
    <property type="organism name" value="mouse"/>
</dbReference>
<dbReference type="PRO" id="PR:Q3ULW8"/>
<dbReference type="Proteomes" id="UP000000589">
    <property type="component" value="Chromosome 9"/>
</dbReference>
<dbReference type="RNAct" id="Q3ULW8">
    <property type="molecule type" value="protein"/>
</dbReference>
<dbReference type="Bgee" id="ENSMUSG00000023249">
    <property type="expression patterns" value="Expressed in extra-ocular muscle and 204 other cell types or tissues"/>
</dbReference>
<dbReference type="ExpressionAtlas" id="Q3ULW8">
    <property type="expression patterns" value="baseline and differential"/>
</dbReference>
<dbReference type="GO" id="GO:0005814">
    <property type="term" value="C:centriole"/>
    <property type="evidence" value="ECO:0007669"/>
    <property type="project" value="UniProtKB-SubCell"/>
</dbReference>
<dbReference type="GO" id="GO:0005813">
    <property type="term" value="C:centrosome"/>
    <property type="evidence" value="ECO:0007669"/>
    <property type="project" value="UniProtKB-SubCell"/>
</dbReference>
<dbReference type="GO" id="GO:0005737">
    <property type="term" value="C:cytoplasm"/>
    <property type="evidence" value="ECO:0007669"/>
    <property type="project" value="UniProtKB-KW"/>
</dbReference>
<dbReference type="GO" id="GO:0045171">
    <property type="term" value="C:intercellular bridge"/>
    <property type="evidence" value="ECO:0007669"/>
    <property type="project" value="Ensembl"/>
</dbReference>
<dbReference type="GO" id="GO:0016604">
    <property type="term" value="C:nuclear body"/>
    <property type="evidence" value="ECO:0007669"/>
    <property type="project" value="Ensembl"/>
</dbReference>
<dbReference type="GO" id="GO:0035861">
    <property type="term" value="C:site of double-strand break"/>
    <property type="evidence" value="ECO:0000314"/>
    <property type="project" value="MGI"/>
</dbReference>
<dbReference type="GO" id="GO:0140294">
    <property type="term" value="F:NAD DNA ADP-ribosyltransferase activity"/>
    <property type="evidence" value="ECO:0000250"/>
    <property type="project" value="UniProtKB"/>
</dbReference>
<dbReference type="GO" id="GO:0003950">
    <property type="term" value="F:NAD+ poly-ADP-ribosyltransferase activity"/>
    <property type="evidence" value="ECO:0000266"/>
    <property type="project" value="MGI"/>
</dbReference>
<dbReference type="GO" id="GO:0140806">
    <property type="term" value="F:NAD+-protein-aspartate ADP-ribosyltransferase activity"/>
    <property type="evidence" value="ECO:0007669"/>
    <property type="project" value="Ensembl"/>
</dbReference>
<dbReference type="GO" id="GO:0140807">
    <property type="term" value="F:NAD+-protein-glutamate ADP-ribosyltransferase activity"/>
    <property type="evidence" value="ECO:0007669"/>
    <property type="project" value="Ensembl"/>
</dbReference>
<dbReference type="GO" id="GO:0140804">
    <property type="term" value="F:NAD+-protein-lysine ADP-ribosyltransferase activity"/>
    <property type="evidence" value="ECO:0007669"/>
    <property type="project" value="Ensembl"/>
</dbReference>
<dbReference type="GO" id="GO:0016779">
    <property type="term" value="F:nucleotidyltransferase activity"/>
    <property type="evidence" value="ECO:0007669"/>
    <property type="project" value="UniProtKB-KW"/>
</dbReference>
<dbReference type="GO" id="GO:0030592">
    <property type="term" value="P:DNA ADP-ribosylation"/>
    <property type="evidence" value="ECO:0000250"/>
    <property type="project" value="UniProtKB"/>
</dbReference>
<dbReference type="GO" id="GO:0006302">
    <property type="term" value="P:double-strand break repair"/>
    <property type="evidence" value="ECO:0000316"/>
    <property type="project" value="MGI"/>
</dbReference>
<dbReference type="GO" id="GO:0006303">
    <property type="term" value="P:double-strand break repair via nonhomologous end joining"/>
    <property type="evidence" value="ECO:0007669"/>
    <property type="project" value="Ensembl"/>
</dbReference>
<dbReference type="GO" id="GO:0045829">
    <property type="term" value="P:negative regulation of isotype switching"/>
    <property type="evidence" value="ECO:0000315"/>
    <property type="project" value="UniProtKB"/>
</dbReference>
<dbReference type="GO" id="GO:2001034">
    <property type="term" value="P:positive regulation of double-strand break repair via nonhomologous end joining"/>
    <property type="evidence" value="ECO:0000250"/>
    <property type="project" value="UniProtKB"/>
</dbReference>
<dbReference type="GO" id="GO:0070213">
    <property type="term" value="P:protein auto-ADP-ribosylation"/>
    <property type="evidence" value="ECO:0007669"/>
    <property type="project" value="Ensembl"/>
</dbReference>
<dbReference type="GO" id="GO:1990166">
    <property type="term" value="P:protein localization to site of double-strand break"/>
    <property type="evidence" value="ECO:0000266"/>
    <property type="project" value="MGI"/>
</dbReference>
<dbReference type="GO" id="GO:0060236">
    <property type="term" value="P:regulation of mitotic spindle organization"/>
    <property type="evidence" value="ECO:0000266"/>
    <property type="project" value="MGI"/>
</dbReference>
<dbReference type="GO" id="GO:0000723">
    <property type="term" value="P:telomere maintenance"/>
    <property type="evidence" value="ECO:0000266"/>
    <property type="project" value="MGI"/>
</dbReference>
<dbReference type="CDD" id="cd01437">
    <property type="entry name" value="parp_like"/>
    <property type="match status" value="1"/>
</dbReference>
<dbReference type="FunFam" id="1.20.142.10:FF:000006">
    <property type="entry name" value="Poly [ADP-ribose] polymerase"/>
    <property type="match status" value="1"/>
</dbReference>
<dbReference type="FunFam" id="2.20.140.10:FF:000001">
    <property type="entry name" value="Poly [ADP-ribose] polymerase"/>
    <property type="match status" value="1"/>
</dbReference>
<dbReference type="FunFam" id="3.90.228.10:FF:000009">
    <property type="entry name" value="Poly [ADP-ribose] polymerase"/>
    <property type="match status" value="1"/>
</dbReference>
<dbReference type="Gene3D" id="3.90.228.10">
    <property type="match status" value="1"/>
</dbReference>
<dbReference type="Gene3D" id="1.20.142.10">
    <property type="entry name" value="Poly(ADP-ribose) polymerase, regulatory domain"/>
    <property type="match status" value="1"/>
</dbReference>
<dbReference type="Gene3D" id="2.20.140.10">
    <property type="entry name" value="WGR domain"/>
    <property type="match status" value="1"/>
</dbReference>
<dbReference type="InterPro" id="IPR050800">
    <property type="entry name" value="ARTD/PARP"/>
</dbReference>
<dbReference type="InterPro" id="IPR012317">
    <property type="entry name" value="Poly(ADP-ribose)pol_cat_dom"/>
</dbReference>
<dbReference type="InterPro" id="IPR004102">
    <property type="entry name" value="Poly(ADP-ribose)pol_reg_dom"/>
</dbReference>
<dbReference type="InterPro" id="IPR036616">
    <property type="entry name" value="Poly(ADP-ribose)pol_reg_dom_sf"/>
</dbReference>
<dbReference type="InterPro" id="IPR036930">
    <property type="entry name" value="WGR_dom_sf"/>
</dbReference>
<dbReference type="InterPro" id="IPR008893">
    <property type="entry name" value="WGR_domain"/>
</dbReference>
<dbReference type="PANTHER" id="PTHR10459">
    <property type="entry name" value="DNA LIGASE"/>
    <property type="match status" value="1"/>
</dbReference>
<dbReference type="PANTHER" id="PTHR10459:SF66">
    <property type="entry name" value="PROTEIN MONO-ADP-RIBOSYLTRANSFERASE PARP3"/>
    <property type="match status" value="1"/>
</dbReference>
<dbReference type="Pfam" id="PF00644">
    <property type="entry name" value="PARP"/>
    <property type="match status" value="1"/>
</dbReference>
<dbReference type="Pfam" id="PF02877">
    <property type="entry name" value="PARP_reg"/>
    <property type="match status" value="1"/>
</dbReference>
<dbReference type="Pfam" id="PF05406">
    <property type="entry name" value="WGR"/>
    <property type="match status" value="1"/>
</dbReference>
<dbReference type="SMART" id="SM00773">
    <property type="entry name" value="WGR"/>
    <property type="match status" value="1"/>
</dbReference>
<dbReference type="SUPFAM" id="SSF56399">
    <property type="entry name" value="ADP-ribosylation"/>
    <property type="match status" value="1"/>
</dbReference>
<dbReference type="SUPFAM" id="SSF47587">
    <property type="entry name" value="Domain of poly(ADP-ribose) polymerase"/>
    <property type="match status" value="1"/>
</dbReference>
<dbReference type="SUPFAM" id="SSF142921">
    <property type="entry name" value="WGR domain-like"/>
    <property type="match status" value="1"/>
</dbReference>
<dbReference type="PROSITE" id="PS51060">
    <property type="entry name" value="PARP_ALPHA_HD"/>
    <property type="match status" value="1"/>
</dbReference>
<dbReference type="PROSITE" id="PS51059">
    <property type="entry name" value="PARP_CATALYTIC"/>
    <property type="match status" value="1"/>
</dbReference>
<dbReference type="PROSITE" id="PS51977">
    <property type="entry name" value="WGR"/>
    <property type="match status" value="1"/>
</dbReference>
<protein>
    <recommendedName>
        <fullName evidence="12">Protein mono-ADP-ribosyltransferase PARP3</fullName>
        <ecNumber evidence="1">2.4.2.-</ecNumber>
    </recommendedName>
    <alternativeName>
        <fullName evidence="1">ADP-ribosyltransferase diphtheria toxin-like 3</fullName>
        <shortName evidence="1">ARTD3</shortName>
    </alternativeName>
    <alternativeName>
        <fullName evidence="12">DNA ADP-ribosyltransferase PARP3</fullName>
        <ecNumber evidence="1">2.4.2.-</ecNumber>
    </alternativeName>
    <alternativeName>
        <fullName evidence="10">NAD(+) ADP-ribosyltransferase 3</fullName>
        <shortName evidence="10">ADPRT-3</shortName>
    </alternativeName>
    <alternativeName>
        <fullName evidence="11">Poly [ADP-ribose] polymerase 3</fullName>
        <shortName evidence="11">PARP-3</shortName>
    </alternativeName>
    <alternativeName>
        <fullName evidence="11">Poly[ADP-ribose] synthase 3</fullName>
        <shortName evidence="1">pADPRT-3</shortName>
    </alternativeName>
</protein>